<reference key="1">
    <citation type="journal article" date="2008" name="J. Phycol.">
        <title>Deep division in the Chlorophyceae (Chlorophyta) revealed by chloroplast phylogenomic analyseS.</title>
        <authorList>
            <person name="Turmel M."/>
            <person name="Brouard J.-S."/>
            <person name="Gagnon C."/>
            <person name="Otis C."/>
            <person name="Lemieux C."/>
        </authorList>
        <dbReference type="AGRICOLA" id="IND44059346"/>
    </citation>
    <scope>NUCLEOTIDE SEQUENCE [GENOMIC DNA]</scope>
    <source>
        <strain>SAG 575-1b / CCAP 575/1B / UTEX LB 40</strain>
    </source>
</reference>
<reference key="2">
    <citation type="journal article" date="2008" name="BMC Genomics">
        <title>Chloroplast DNA sequence of the green alga Oedogonium cardiacum (Chlorophyceae): unique genome architecture, derived characters shared with the Chaetophorales and novel genes acquired through horizontal transfer.</title>
        <authorList>
            <person name="Brouard J.-S."/>
            <person name="Otis C."/>
            <person name="Lemieux C."/>
            <person name="Turmel M."/>
        </authorList>
    </citation>
    <scope>NUCLEOTIDE SEQUENCE [LARGE SCALE GENOMIC DNA]</scope>
    <source>
        <strain>SAG 575-1b / CCAP 575/1B / UTEX LB 40</strain>
    </source>
</reference>
<sequence length="1947" mass="232996">MIKKNLFKDFSRFSFVQSSIKNNVRCHSKLKLVQPFFIKTKQERNKKFLSSYKFSEIQLITIDLASPEKIKEWAEKKLPNGKIFGQVTNPNTLHYKTLKPLKGGLFCERIFGPIKDFECACGIQKQKPFNRIISFQNKQFCSKCDIEYTWSDIRRYQLGYIQLVTPVTHLWYLKGMPSYIRSVLGAKKKHIEAIAYCSEIVTIDQAWKPNRLIPFPETISSVALSSKKRNTFVNKEIVNIQLTYNNFKKFNVNNTRSLYVSINKKLFKKQFSNNSYNCTCVDNEIQNPIFFLKYFNINFLKPQNLKELKVLYINPDFYKVENYPYKNQVKFEFYQKICRSFIKTSLNNHKPIYALNYLSHSFLNSKVKIFSHFEHIDIHTMYVFNEEILINRFSNLARLKKNGKSKKKIGYIHSKKIHININKHLLYFKNKKLKNLQLSNNLKLIIIISNNASLNYFKNWSNTFNCMNTLILKMQFVNKKLHFQYYRSFFNTHTIERVYFNFFSLDYLKNSNFFVNFSKLLALNLLKFMKSNLFNIFIIPIPTILDNFIFKLSLDSQFQRLLNSLSIQKQKVLNSNSVISKSNKIFKKQFFIKNFSLYDEAIEILWQRFWKFGYYFTSNNMNNKLCKIITKFNKNNNGLRSTLPSWLKLIKKLIKKTQIDKKSNQNLLNFRVNVIHTNTQNKFSLFVNLIKIYLKKVLFLFQIAPENIKNIYIKKSIFIFQELRNKNFKYRNFRTQIKKIVIKLFGLELLPWVLSQFIFTSKIFYQFQKSKFSFYHNSNFLTFSRRHSGRNLIKKIKESSFLNFQIGVNNINTIFHYKYSFNCLPSCHIPNYKCRQKFFIYKNKIENILKLKKFRLFFNIWLSRFLKNNISVLNVVVNLKLNNINSNNLQTLNLLFYQKKWLLKKKQIFYNYAMLKEFHSKLLIVGTLHDFSNFIKLIYSSSYKNETLINIFSIQIQPFYKFNFIQKIRKYLNSEYYNSFDSGRTKHYLRKFLNKDSDNLFFKQFNYVYYFILFSSIISTQTIERGSLTSLNNQQFFLNLLCFFKLAKKNIFKKYSWLTSIQKYFYSRQIIKYKKKQQQKSMLKFVKKKTFFNKFLDLINSFIYDYQKRLKLLKKHSIIQLILKKKMYIFYFLKKLQNKLINEIQKYYFYEFEKKKFINIEFNLNNFKNIVIFMNLKKKILFLNSVLFQSQTNFFNKHANLNIFNNSYNYMYIDFNNFLSIGQFWQILINIFKNKINKYYLLSRSLPFIISNDYVKIDPLIKKFHDDLKHQVCFNSFLIKLTFYNSTLLYPLQNIIKNNNKVLQTRQQYYKIIKSNNLFLTNYFKKIRGNFTELSIKKFENIHTIVSCIGYFGYQDILYHQIRELKKNDYFRNFYLKFIKHDLSNNFNEAIFSVISESRISYNDSIFWNNIYSLSNRYSWKSDIELNIFLCYMLSPETPSDILIPLYKQRIHSSNVLREEPPIAGGGIILKLLKELDLPEMKKIDIQLQTILKKIPNKLHEIEVLLKHNQTNLKLLKYYSLKRRTVIEIEKSILRKLKYIRRLNWVSAKPEYMIIRNLPVLPADLRPIFKIQQQLTASDLNRLYQKVIYRNDRLKRFLKNSTTSNSFEMLFAQRMLQEAVDNLIENGKDINSIETDSRGRPLKSLGELLKGKKGRFRQNLLGKRVDYSGRSVIVVGPKLKLHECGLPIEMAIELFLPFLIKEILKNKYALTVRSAKIYIKKHRIKITQLLRQVVKRQPILLNRAPTLHRLGIQAFLPKLVEGKAILLHPLVCSAFNADFDGDQMAVHVPITNEARIEAWKLVLSRNNLLSPATGEPILLPSQDMVLGCYYLTIENLQSLTQKKFRINRKILNQRNYIFSDFEKIFIAYQRNQINLHTNIWVIFNNTIESDSILQEPTEIQVLFSGQYIKVYSDYYQKFNRNGKIYNQVVRTTPGRILFNLMLNNCFN</sequence>
<organism>
    <name type="scientific">Oedogonium cardiacum</name>
    <name type="common">Filamentous green alga</name>
    <dbReference type="NCBI Taxonomy" id="55995"/>
    <lineage>
        <taxon>Eukaryota</taxon>
        <taxon>Viridiplantae</taxon>
        <taxon>Chlorophyta</taxon>
        <taxon>core chlorophytes</taxon>
        <taxon>Chlorophyceae</taxon>
        <taxon>OCC clade</taxon>
        <taxon>Oedogoniales</taxon>
        <taxon>Oedogoniaceae</taxon>
        <taxon>Oedogonium</taxon>
    </lineage>
</organism>
<dbReference type="EC" id="2.7.7.6" evidence="1"/>
<dbReference type="EMBL" id="EF587366">
    <property type="protein sequence ID" value="ABU88206.1"/>
    <property type="molecule type" value="Genomic_DNA"/>
</dbReference>
<dbReference type="EMBL" id="EU677193">
    <property type="protein sequence ID" value="ACC97249.1"/>
    <property type="molecule type" value="Genomic_DNA"/>
</dbReference>
<dbReference type="RefSeq" id="YP_002000409.1">
    <property type="nucleotide sequence ID" value="NC_011031.1"/>
</dbReference>
<dbReference type="SMR" id="B2X1Z3"/>
<dbReference type="GeneID" id="6440073"/>
<dbReference type="GO" id="GO:0009507">
    <property type="term" value="C:chloroplast"/>
    <property type="evidence" value="ECO:0007669"/>
    <property type="project" value="UniProtKB-SubCell"/>
</dbReference>
<dbReference type="GO" id="GO:0000428">
    <property type="term" value="C:DNA-directed RNA polymerase complex"/>
    <property type="evidence" value="ECO:0007669"/>
    <property type="project" value="UniProtKB-KW"/>
</dbReference>
<dbReference type="GO" id="GO:0005739">
    <property type="term" value="C:mitochondrion"/>
    <property type="evidence" value="ECO:0007669"/>
    <property type="project" value="GOC"/>
</dbReference>
<dbReference type="GO" id="GO:0003677">
    <property type="term" value="F:DNA binding"/>
    <property type="evidence" value="ECO:0007669"/>
    <property type="project" value="UniProtKB-UniRule"/>
</dbReference>
<dbReference type="GO" id="GO:0003899">
    <property type="term" value="F:DNA-directed RNA polymerase activity"/>
    <property type="evidence" value="ECO:0007669"/>
    <property type="project" value="UniProtKB-UniRule"/>
</dbReference>
<dbReference type="GO" id="GO:0000287">
    <property type="term" value="F:magnesium ion binding"/>
    <property type="evidence" value="ECO:0007669"/>
    <property type="project" value="UniProtKB-UniRule"/>
</dbReference>
<dbReference type="GO" id="GO:0008270">
    <property type="term" value="F:zinc ion binding"/>
    <property type="evidence" value="ECO:0007669"/>
    <property type="project" value="UniProtKB-UniRule"/>
</dbReference>
<dbReference type="GO" id="GO:0006351">
    <property type="term" value="P:DNA-templated transcription"/>
    <property type="evidence" value="ECO:0007669"/>
    <property type="project" value="UniProtKB-UniRule"/>
</dbReference>
<dbReference type="Gene3D" id="1.10.40.90">
    <property type="match status" value="1"/>
</dbReference>
<dbReference type="Gene3D" id="2.40.40.20">
    <property type="match status" value="1"/>
</dbReference>
<dbReference type="Gene3D" id="4.10.860.120">
    <property type="entry name" value="RNA polymerase II, clamp domain"/>
    <property type="match status" value="1"/>
</dbReference>
<dbReference type="Gene3D" id="1.10.274.100">
    <property type="entry name" value="RNA polymerase Rpb1, domain 3"/>
    <property type="match status" value="1"/>
</dbReference>
<dbReference type="HAMAP" id="MF_01323">
    <property type="entry name" value="RNApol_bact_RpoC1"/>
    <property type="match status" value="1"/>
</dbReference>
<dbReference type="InterPro" id="IPR045867">
    <property type="entry name" value="DNA-dir_RpoC_beta_prime"/>
</dbReference>
<dbReference type="InterPro" id="IPR000722">
    <property type="entry name" value="RNA_pol_asu"/>
</dbReference>
<dbReference type="InterPro" id="IPR006592">
    <property type="entry name" value="RNA_pol_N"/>
</dbReference>
<dbReference type="InterPro" id="IPR007080">
    <property type="entry name" value="RNA_pol_Rpb1_1"/>
</dbReference>
<dbReference type="InterPro" id="IPR007066">
    <property type="entry name" value="RNA_pol_Rpb1_3"/>
</dbReference>
<dbReference type="InterPro" id="IPR042102">
    <property type="entry name" value="RNA_pol_Rpb1_3_sf"/>
</dbReference>
<dbReference type="InterPro" id="IPR044893">
    <property type="entry name" value="RNA_pol_Rpb1_clamp_domain"/>
</dbReference>
<dbReference type="InterPro" id="IPR034678">
    <property type="entry name" value="RNApol_RpoC1"/>
</dbReference>
<dbReference type="PANTHER" id="PTHR19376">
    <property type="entry name" value="DNA-DIRECTED RNA POLYMERASE"/>
    <property type="match status" value="1"/>
</dbReference>
<dbReference type="PANTHER" id="PTHR19376:SF68">
    <property type="entry name" value="DNA-DIRECTED RNA POLYMERASE SUBUNIT BETA"/>
    <property type="match status" value="1"/>
</dbReference>
<dbReference type="Pfam" id="PF04997">
    <property type="entry name" value="RNA_pol_Rpb1_1"/>
    <property type="match status" value="2"/>
</dbReference>
<dbReference type="Pfam" id="PF00623">
    <property type="entry name" value="RNA_pol_Rpb1_2"/>
    <property type="match status" value="2"/>
</dbReference>
<dbReference type="Pfam" id="PF04983">
    <property type="entry name" value="RNA_pol_Rpb1_3"/>
    <property type="match status" value="1"/>
</dbReference>
<dbReference type="SMART" id="SM00663">
    <property type="entry name" value="RPOLA_N"/>
    <property type="match status" value="1"/>
</dbReference>
<dbReference type="SUPFAM" id="SSF64484">
    <property type="entry name" value="beta and beta-prime subunits of DNA dependent RNA-polymerase"/>
    <property type="match status" value="2"/>
</dbReference>
<geneLocation type="chloroplast"/>
<keyword id="KW-0150">Chloroplast</keyword>
<keyword id="KW-0240">DNA-directed RNA polymerase</keyword>
<keyword id="KW-0460">Magnesium</keyword>
<keyword id="KW-0479">Metal-binding</keyword>
<keyword id="KW-0548">Nucleotidyltransferase</keyword>
<keyword id="KW-0934">Plastid</keyword>
<keyword id="KW-0804">Transcription</keyword>
<keyword id="KW-0808">Transferase</keyword>
<keyword id="KW-0862">Zinc</keyword>
<feature type="chain" id="PRO_0000353503" description="DNA-directed RNA polymerase subunit beta'">
    <location>
        <begin position="1"/>
        <end position="1947"/>
    </location>
</feature>
<feature type="binding site" evidence="1">
    <location>
        <position position="119"/>
    </location>
    <ligand>
        <name>Zn(2+)</name>
        <dbReference type="ChEBI" id="CHEBI:29105"/>
    </ligand>
</feature>
<feature type="binding site" evidence="1">
    <location>
        <position position="121"/>
    </location>
    <ligand>
        <name>Zn(2+)</name>
        <dbReference type="ChEBI" id="CHEBI:29105"/>
    </ligand>
</feature>
<feature type="binding site" evidence="1">
    <location>
        <position position="141"/>
    </location>
    <ligand>
        <name>Zn(2+)</name>
        <dbReference type="ChEBI" id="CHEBI:29105"/>
    </ligand>
</feature>
<feature type="binding site" evidence="1">
    <location>
        <position position="144"/>
    </location>
    <ligand>
        <name>Zn(2+)</name>
        <dbReference type="ChEBI" id="CHEBI:29105"/>
    </ligand>
</feature>
<feature type="binding site" evidence="1">
    <location>
        <position position="1778"/>
    </location>
    <ligand>
        <name>Mg(2+)</name>
        <dbReference type="ChEBI" id="CHEBI:18420"/>
    </ligand>
</feature>
<feature type="binding site" evidence="1">
    <location>
        <position position="1780"/>
    </location>
    <ligand>
        <name>Mg(2+)</name>
        <dbReference type="ChEBI" id="CHEBI:18420"/>
    </ligand>
</feature>
<feature type="binding site" evidence="1">
    <location>
        <position position="1782"/>
    </location>
    <ligand>
        <name>Mg(2+)</name>
        <dbReference type="ChEBI" id="CHEBI:18420"/>
    </ligand>
</feature>
<protein>
    <recommendedName>
        <fullName evidence="1">DNA-directed RNA polymerase subunit beta'</fullName>
        <ecNumber evidence="1">2.7.7.6</ecNumber>
    </recommendedName>
    <alternativeName>
        <fullName evidence="1">PEP</fullName>
    </alternativeName>
    <alternativeName>
        <fullName evidence="1">Plastid-encoded RNA polymerase subunit beta'</fullName>
        <shortName evidence="1">RNA polymerase subunit beta'</shortName>
    </alternativeName>
</protein>
<proteinExistence type="inferred from homology"/>
<evidence type="ECO:0000255" key="1">
    <source>
        <dbReference type="HAMAP-Rule" id="MF_01323"/>
    </source>
</evidence>
<evidence type="ECO:0000305" key="2"/>
<accession>B2X1Z3</accession>
<comment type="function">
    <text evidence="1">DNA-dependent RNA polymerase catalyzes the transcription of DNA into RNA using the four ribonucleoside triphosphates as substrates.</text>
</comment>
<comment type="catalytic activity">
    <reaction evidence="1">
        <text>RNA(n) + a ribonucleoside 5'-triphosphate = RNA(n+1) + diphosphate</text>
        <dbReference type="Rhea" id="RHEA:21248"/>
        <dbReference type="Rhea" id="RHEA-COMP:14527"/>
        <dbReference type="Rhea" id="RHEA-COMP:17342"/>
        <dbReference type="ChEBI" id="CHEBI:33019"/>
        <dbReference type="ChEBI" id="CHEBI:61557"/>
        <dbReference type="ChEBI" id="CHEBI:140395"/>
        <dbReference type="EC" id="2.7.7.6"/>
    </reaction>
</comment>
<comment type="cofactor">
    <cofactor evidence="1">
        <name>Mg(2+)</name>
        <dbReference type="ChEBI" id="CHEBI:18420"/>
    </cofactor>
    <text evidence="1">Binds 1 Mg(2+) ion per subunit.</text>
</comment>
<comment type="cofactor">
    <cofactor evidence="1">
        <name>Zn(2+)</name>
        <dbReference type="ChEBI" id="CHEBI:29105"/>
    </cofactor>
    <text evidence="1">Binds 1 Zn(2+) ion per subunit.</text>
</comment>
<comment type="subunit">
    <text evidence="1">In plastids the minimal PEP RNA polymerase catalytic core is composed of four subunits: alpha, beta, beta', and beta''. When a (nuclear-encoded) sigma factor is associated with the core the holoenzyme is formed, which can initiate transcription.</text>
</comment>
<comment type="subcellular location">
    <subcellularLocation>
        <location evidence="1">Plastid</location>
        <location evidence="1">Chloroplast</location>
    </subcellularLocation>
</comment>
<comment type="similarity">
    <text evidence="1 2">Belongs to the RNA polymerase beta' chain family. RpoC1 subfamily.</text>
</comment>
<gene>
    <name evidence="1" type="primary">rpoC1</name>
</gene>
<name>RPOC1_OEDCA</name>